<accession>Q8CP68</accession>
<reference key="1">
    <citation type="journal article" date="2003" name="Mol. Microbiol.">
        <title>Genome-based analysis of virulence genes in a non-biofilm-forming Staphylococcus epidermidis strain (ATCC 12228).</title>
        <authorList>
            <person name="Zhang Y.-Q."/>
            <person name="Ren S.-X."/>
            <person name="Li H.-L."/>
            <person name="Wang Y.-X."/>
            <person name="Fu G."/>
            <person name="Yang J."/>
            <person name="Qin Z.-Q."/>
            <person name="Miao Y.-G."/>
            <person name="Wang W.-Y."/>
            <person name="Chen R.-S."/>
            <person name="Shen Y."/>
            <person name="Chen Z."/>
            <person name="Yuan Z.-H."/>
            <person name="Zhao G.-P."/>
            <person name="Qu D."/>
            <person name="Danchin A."/>
            <person name="Wen Y.-M."/>
        </authorList>
    </citation>
    <scope>NUCLEOTIDE SEQUENCE [LARGE SCALE GENOMIC DNA]</scope>
    <source>
        <strain>ATCC 12228 / FDA PCI 1200</strain>
    </source>
</reference>
<sequence>MELKTSYASDNYPIIVKHHAINSLERYIKNEEQRFFIIDKQVYNLFVDKLEALAQKFDAKCIVIPSGETSKSFEHYHRTIEYLLSHQLTRQTCIVAIGGGATGDFAGFIAATLLRGVSFVQVPTTILAHDSSVGGKVGINSEHGKNLIGAFYRPKAVIYDLDFLETLPYSEILSGYAEVYKHALLNGEKSTKNIESNFTSNKVLQALKNLDYYLFEGIKTKLNIVVEDEKEKGKRKFLNLGHTFGHAIEYEHKIPHGHAVMIGILYQFIVANHLFETNYNIQHYINYMKKLKYPLSIIKQLHFEDTYHFMLLDKKNDYNGIQMVLLKNLGKPVVTHVDKDTLLSAFEELQSYFK</sequence>
<dbReference type="EC" id="4.2.3.4" evidence="1"/>
<dbReference type="EMBL" id="AE015929">
    <property type="protein sequence ID" value="AAO04751.1"/>
    <property type="molecule type" value="Genomic_DNA"/>
</dbReference>
<dbReference type="RefSeq" id="NP_764709.1">
    <property type="nucleotide sequence ID" value="NC_004461.1"/>
</dbReference>
<dbReference type="RefSeq" id="WP_001831320.1">
    <property type="nucleotide sequence ID" value="NZ_WBME01000006.1"/>
</dbReference>
<dbReference type="SMR" id="Q8CP68"/>
<dbReference type="GeneID" id="50018724"/>
<dbReference type="KEGG" id="sep:SE_1154"/>
<dbReference type="PATRIC" id="fig|176280.10.peg.1126"/>
<dbReference type="eggNOG" id="COG0337">
    <property type="taxonomic scope" value="Bacteria"/>
</dbReference>
<dbReference type="HOGENOM" id="CLU_001201_0_1_9"/>
<dbReference type="OrthoDB" id="9806583at2"/>
<dbReference type="UniPathway" id="UPA00053">
    <property type="reaction ID" value="UER00085"/>
</dbReference>
<dbReference type="Proteomes" id="UP000001411">
    <property type="component" value="Chromosome"/>
</dbReference>
<dbReference type="GO" id="GO:0005737">
    <property type="term" value="C:cytoplasm"/>
    <property type="evidence" value="ECO:0007669"/>
    <property type="project" value="UniProtKB-SubCell"/>
</dbReference>
<dbReference type="GO" id="GO:0003856">
    <property type="term" value="F:3-dehydroquinate synthase activity"/>
    <property type="evidence" value="ECO:0007669"/>
    <property type="project" value="UniProtKB-UniRule"/>
</dbReference>
<dbReference type="GO" id="GO:0046872">
    <property type="term" value="F:metal ion binding"/>
    <property type="evidence" value="ECO:0007669"/>
    <property type="project" value="UniProtKB-KW"/>
</dbReference>
<dbReference type="GO" id="GO:0000166">
    <property type="term" value="F:nucleotide binding"/>
    <property type="evidence" value="ECO:0007669"/>
    <property type="project" value="UniProtKB-KW"/>
</dbReference>
<dbReference type="GO" id="GO:0008652">
    <property type="term" value="P:amino acid biosynthetic process"/>
    <property type="evidence" value="ECO:0007669"/>
    <property type="project" value="UniProtKB-KW"/>
</dbReference>
<dbReference type="GO" id="GO:0009073">
    <property type="term" value="P:aromatic amino acid family biosynthetic process"/>
    <property type="evidence" value="ECO:0007669"/>
    <property type="project" value="UniProtKB-KW"/>
</dbReference>
<dbReference type="GO" id="GO:0009423">
    <property type="term" value="P:chorismate biosynthetic process"/>
    <property type="evidence" value="ECO:0007669"/>
    <property type="project" value="UniProtKB-UniRule"/>
</dbReference>
<dbReference type="CDD" id="cd08195">
    <property type="entry name" value="DHQS"/>
    <property type="match status" value="1"/>
</dbReference>
<dbReference type="FunFam" id="3.40.50.1970:FF:000007">
    <property type="entry name" value="Pentafunctional AROM polypeptide"/>
    <property type="match status" value="1"/>
</dbReference>
<dbReference type="Gene3D" id="3.40.50.1970">
    <property type="match status" value="1"/>
</dbReference>
<dbReference type="Gene3D" id="1.20.1090.10">
    <property type="entry name" value="Dehydroquinate synthase-like - alpha domain"/>
    <property type="match status" value="1"/>
</dbReference>
<dbReference type="HAMAP" id="MF_00110">
    <property type="entry name" value="DHQ_synthase"/>
    <property type="match status" value="1"/>
</dbReference>
<dbReference type="InterPro" id="IPR050071">
    <property type="entry name" value="Dehydroquinate_synthase"/>
</dbReference>
<dbReference type="InterPro" id="IPR016037">
    <property type="entry name" value="DHQ_synth_AroB"/>
</dbReference>
<dbReference type="InterPro" id="IPR030963">
    <property type="entry name" value="DHQ_synth_fam"/>
</dbReference>
<dbReference type="InterPro" id="IPR030960">
    <property type="entry name" value="DHQS/DOIS_N"/>
</dbReference>
<dbReference type="InterPro" id="IPR056179">
    <property type="entry name" value="DHQS_C"/>
</dbReference>
<dbReference type="NCBIfam" id="TIGR01357">
    <property type="entry name" value="aroB"/>
    <property type="match status" value="1"/>
</dbReference>
<dbReference type="PANTHER" id="PTHR43622">
    <property type="entry name" value="3-DEHYDROQUINATE SYNTHASE"/>
    <property type="match status" value="1"/>
</dbReference>
<dbReference type="PANTHER" id="PTHR43622:SF7">
    <property type="entry name" value="3-DEHYDROQUINATE SYNTHASE, CHLOROPLASTIC"/>
    <property type="match status" value="1"/>
</dbReference>
<dbReference type="Pfam" id="PF01761">
    <property type="entry name" value="DHQ_synthase"/>
    <property type="match status" value="1"/>
</dbReference>
<dbReference type="Pfam" id="PF24621">
    <property type="entry name" value="DHQS_C"/>
    <property type="match status" value="1"/>
</dbReference>
<dbReference type="PIRSF" id="PIRSF001455">
    <property type="entry name" value="DHQ_synth"/>
    <property type="match status" value="1"/>
</dbReference>
<dbReference type="SUPFAM" id="SSF56796">
    <property type="entry name" value="Dehydroquinate synthase-like"/>
    <property type="match status" value="1"/>
</dbReference>
<feature type="chain" id="PRO_0000140785" description="3-dehydroquinate synthase">
    <location>
        <begin position="1"/>
        <end position="354"/>
    </location>
</feature>
<feature type="binding site" evidence="1">
    <location>
        <begin position="66"/>
        <end position="71"/>
    </location>
    <ligand>
        <name>NAD(+)</name>
        <dbReference type="ChEBI" id="CHEBI:57540"/>
    </ligand>
</feature>
<feature type="binding site" evidence="1">
    <location>
        <begin position="100"/>
        <end position="104"/>
    </location>
    <ligand>
        <name>NAD(+)</name>
        <dbReference type="ChEBI" id="CHEBI:57540"/>
    </ligand>
</feature>
<feature type="binding site" evidence="1">
    <location>
        <begin position="124"/>
        <end position="125"/>
    </location>
    <ligand>
        <name>NAD(+)</name>
        <dbReference type="ChEBI" id="CHEBI:57540"/>
    </ligand>
</feature>
<feature type="binding site" evidence="1">
    <location>
        <position position="136"/>
    </location>
    <ligand>
        <name>NAD(+)</name>
        <dbReference type="ChEBI" id="CHEBI:57540"/>
    </ligand>
</feature>
<feature type="binding site" evidence="1">
    <location>
        <position position="145"/>
    </location>
    <ligand>
        <name>NAD(+)</name>
        <dbReference type="ChEBI" id="CHEBI:57540"/>
    </ligand>
</feature>
<feature type="binding site" evidence="1">
    <location>
        <begin position="163"/>
        <end position="166"/>
    </location>
    <ligand>
        <name>NAD(+)</name>
        <dbReference type="ChEBI" id="CHEBI:57540"/>
    </ligand>
</feature>
<feature type="binding site" evidence="1">
    <location>
        <position position="178"/>
    </location>
    <ligand>
        <name>Zn(2+)</name>
        <dbReference type="ChEBI" id="CHEBI:29105"/>
    </ligand>
</feature>
<feature type="binding site" evidence="1">
    <location>
        <position position="242"/>
    </location>
    <ligand>
        <name>Zn(2+)</name>
        <dbReference type="ChEBI" id="CHEBI:29105"/>
    </ligand>
</feature>
<feature type="binding site" evidence="1">
    <location>
        <position position="256"/>
    </location>
    <ligand>
        <name>Zn(2+)</name>
        <dbReference type="ChEBI" id="CHEBI:29105"/>
    </ligand>
</feature>
<comment type="function">
    <text evidence="1">Catalyzes the conversion of 3-deoxy-D-arabino-heptulosonate 7-phosphate (DAHP) to dehydroquinate (DHQ).</text>
</comment>
<comment type="catalytic activity">
    <reaction evidence="1">
        <text>7-phospho-2-dehydro-3-deoxy-D-arabino-heptonate = 3-dehydroquinate + phosphate</text>
        <dbReference type="Rhea" id="RHEA:21968"/>
        <dbReference type="ChEBI" id="CHEBI:32364"/>
        <dbReference type="ChEBI" id="CHEBI:43474"/>
        <dbReference type="ChEBI" id="CHEBI:58394"/>
        <dbReference type="EC" id="4.2.3.4"/>
    </reaction>
</comment>
<comment type="cofactor">
    <cofactor evidence="1">
        <name>NAD(+)</name>
        <dbReference type="ChEBI" id="CHEBI:57540"/>
    </cofactor>
</comment>
<comment type="cofactor">
    <cofactor evidence="1">
        <name>Co(2+)</name>
        <dbReference type="ChEBI" id="CHEBI:48828"/>
    </cofactor>
    <cofactor evidence="1">
        <name>Zn(2+)</name>
        <dbReference type="ChEBI" id="CHEBI:29105"/>
    </cofactor>
    <text evidence="1">Binds 1 divalent metal cation per subunit. Can use either Co(2+) or Zn(2+).</text>
</comment>
<comment type="pathway">
    <text evidence="1">Metabolic intermediate biosynthesis; chorismate biosynthesis; chorismate from D-erythrose 4-phosphate and phosphoenolpyruvate: step 2/7.</text>
</comment>
<comment type="subcellular location">
    <subcellularLocation>
        <location evidence="1">Cytoplasm</location>
    </subcellularLocation>
</comment>
<comment type="similarity">
    <text evidence="1">Belongs to the sugar phosphate cyclases superfamily. Dehydroquinate synthase family.</text>
</comment>
<name>AROB_STAES</name>
<keyword id="KW-0028">Amino-acid biosynthesis</keyword>
<keyword id="KW-0057">Aromatic amino acid biosynthesis</keyword>
<keyword id="KW-0170">Cobalt</keyword>
<keyword id="KW-0963">Cytoplasm</keyword>
<keyword id="KW-0456">Lyase</keyword>
<keyword id="KW-0479">Metal-binding</keyword>
<keyword id="KW-0520">NAD</keyword>
<keyword id="KW-0547">Nucleotide-binding</keyword>
<keyword id="KW-0862">Zinc</keyword>
<evidence type="ECO:0000255" key="1">
    <source>
        <dbReference type="HAMAP-Rule" id="MF_00110"/>
    </source>
</evidence>
<proteinExistence type="inferred from homology"/>
<protein>
    <recommendedName>
        <fullName evidence="1">3-dehydroquinate synthase</fullName>
        <shortName evidence="1">DHQS</shortName>
        <ecNumber evidence="1">4.2.3.4</ecNumber>
    </recommendedName>
</protein>
<organism>
    <name type="scientific">Staphylococcus epidermidis (strain ATCC 12228 / FDA PCI 1200)</name>
    <dbReference type="NCBI Taxonomy" id="176280"/>
    <lineage>
        <taxon>Bacteria</taxon>
        <taxon>Bacillati</taxon>
        <taxon>Bacillota</taxon>
        <taxon>Bacilli</taxon>
        <taxon>Bacillales</taxon>
        <taxon>Staphylococcaceae</taxon>
        <taxon>Staphylococcus</taxon>
    </lineage>
</organism>
<gene>
    <name evidence="1" type="primary">aroB</name>
    <name type="ordered locus">SE_1154</name>
</gene>